<dbReference type="EC" id="2.7.2.11" evidence="1"/>
<dbReference type="EMBL" id="CP000240">
    <property type="protein sequence ID" value="ABD01511.1"/>
    <property type="status" value="ALT_INIT"/>
    <property type="molecule type" value="Genomic_DNA"/>
</dbReference>
<dbReference type="RefSeq" id="WP_041436197.1">
    <property type="nucleotide sequence ID" value="NC_007776.1"/>
</dbReference>
<dbReference type="SMR" id="Q2JNZ0"/>
<dbReference type="STRING" id="321332.CYB_0519"/>
<dbReference type="KEGG" id="cyb:CYB_0519"/>
<dbReference type="eggNOG" id="COG0263">
    <property type="taxonomic scope" value="Bacteria"/>
</dbReference>
<dbReference type="HOGENOM" id="CLU_025400_2_0_3"/>
<dbReference type="OrthoDB" id="9804434at2"/>
<dbReference type="UniPathway" id="UPA00098">
    <property type="reaction ID" value="UER00359"/>
</dbReference>
<dbReference type="Proteomes" id="UP000001938">
    <property type="component" value="Chromosome"/>
</dbReference>
<dbReference type="GO" id="GO:0005829">
    <property type="term" value="C:cytosol"/>
    <property type="evidence" value="ECO:0007669"/>
    <property type="project" value="TreeGrafter"/>
</dbReference>
<dbReference type="GO" id="GO:0005524">
    <property type="term" value="F:ATP binding"/>
    <property type="evidence" value="ECO:0007669"/>
    <property type="project" value="UniProtKB-KW"/>
</dbReference>
<dbReference type="GO" id="GO:0004349">
    <property type="term" value="F:glutamate 5-kinase activity"/>
    <property type="evidence" value="ECO:0007669"/>
    <property type="project" value="UniProtKB-UniRule"/>
</dbReference>
<dbReference type="GO" id="GO:0003723">
    <property type="term" value="F:RNA binding"/>
    <property type="evidence" value="ECO:0007669"/>
    <property type="project" value="InterPro"/>
</dbReference>
<dbReference type="GO" id="GO:0055129">
    <property type="term" value="P:L-proline biosynthetic process"/>
    <property type="evidence" value="ECO:0007669"/>
    <property type="project" value="UniProtKB-UniRule"/>
</dbReference>
<dbReference type="CDD" id="cd04242">
    <property type="entry name" value="AAK_G5K_ProB"/>
    <property type="match status" value="1"/>
</dbReference>
<dbReference type="CDD" id="cd21157">
    <property type="entry name" value="PUA_G5K"/>
    <property type="match status" value="1"/>
</dbReference>
<dbReference type="FunFam" id="2.30.130.10:FF:000007">
    <property type="entry name" value="Glutamate 5-kinase"/>
    <property type="match status" value="1"/>
</dbReference>
<dbReference type="FunFam" id="3.40.1160.10:FF:000018">
    <property type="entry name" value="Glutamate 5-kinase"/>
    <property type="match status" value="1"/>
</dbReference>
<dbReference type="Gene3D" id="3.40.1160.10">
    <property type="entry name" value="Acetylglutamate kinase-like"/>
    <property type="match status" value="2"/>
</dbReference>
<dbReference type="Gene3D" id="2.30.130.10">
    <property type="entry name" value="PUA domain"/>
    <property type="match status" value="1"/>
</dbReference>
<dbReference type="HAMAP" id="MF_00456">
    <property type="entry name" value="ProB"/>
    <property type="match status" value="1"/>
</dbReference>
<dbReference type="InterPro" id="IPR036393">
    <property type="entry name" value="AceGlu_kinase-like_sf"/>
</dbReference>
<dbReference type="InterPro" id="IPR001048">
    <property type="entry name" value="Asp/Glu/Uridylate_kinase"/>
</dbReference>
<dbReference type="InterPro" id="IPR041739">
    <property type="entry name" value="G5K_ProB"/>
</dbReference>
<dbReference type="InterPro" id="IPR001057">
    <property type="entry name" value="Glu/AcGlu_kinase"/>
</dbReference>
<dbReference type="InterPro" id="IPR011529">
    <property type="entry name" value="Glu_5kinase"/>
</dbReference>
<dbReference type="InterPro" id="IPR005715">
    <property type="entry name" value="Glu_5kinase/COase_Synthase"/>
</dbReference>
<dbReference type="InterPro" id="IPR019797">
    <property type="entry name" value="Glutamate_5-kinase_CS"/>
</dbReference>
<dbReference type="InterPro" id="IPR002478">
    <property type="entry name" value="PUA"/>
</dbReference>
<dbReference type="InterPro" id="IPR015947">
    <property type="entry name" value="PUA-like_sf"/>
</dbReference>
<dbReference type="InterPro" id="IPR036974">
    <property type="entry name" value="PUA_sf"/>
</dbReference>
<dbReference type="NCBIfam" id="TIGR01027">
    <property type="entry name" value="proB"/>
    <property type="match status" value="1"/>
</dbReference>
<dbReference type="PANTHER" id="PTHR43654">
    <property type="entry name" value="GLUTAMATE 5-KINASE"/>
    <property type="match status" value="1"/>
</dbReference>
<dbReference type="PANTHER" id="PTHR43654:SF3">
    <property type="entry name" value="GLUTAMATE 5-KINASE"/>
    <property type="match status" value="1"/>
</dbReference>
<dbReference type="Pfam" id="PF00696">
    <property type="entry name" value="AA_kinase"/>
    <property type="match status" value="1"/>
</dbReference>
<dbReference type="Pfam" id="PF01472">
    <property type="entry name" value="PUA"/>
    <property type="match status" value="1"/>
</dbReference>
<dbReference type="PIRSF" id="PIRSF000729">
    <property type="entry name" value="GK"/>
    <property type="match status" value="1"/>
</dbReference>
<dbReference type="PRINTS" id="PR00474">
    <property type="entry name" value="GLU5KINASE"/>
</dbReference>
<dbReference type="SMART" id="SM00359">
    <property type="entry name" value="PUA"/>
    <property type="match status" value="1"/>
</dbReference>
<dbReference type="SUPFAM" id="SSF53633">
    <property type="entry name" value="Carbamate kinase-like"/>
    <property type="match status" value="1"/>
</dbReference>
<dbReference type="SUPFAM" id="SSF88697">
    <property type="entry name" value="PUA domain-like"/>
    <property type="match status" value="1"/>
</dbReference>
<dbReference type="PROSITE" id="PS00902">
    <property type="entry name" value="GLUTAMATE_5_KINASE"/>
    <property type="match status" value="1"/>
</dbReference>
<dbReference type="PROSITE" id="PS50890">
    <property type="entry name" value="PUA"/>
    <property type="match status" value="1"/>
</dbReference>
<evidence type="ECO:0000255" key="1">
    <source>
        <dbReference type="HAMAP-Rule" id="MF_00456"/>
    </source>
</evidence>
<evidence type="ECO:0000305" key="2"/>
<keyword id="KW-0028">Amino-acid biosynthesis</keyword>
<keyword id="KW-0067">ATP-binding</keyword>
<keyword id="KW-0963">Cytoplasm</keyword>
<keyword id="KW-0418">Kinase</keyword>
<keyword id="KW-0547">Nucleotide-binding</keyword>
<keyword id="KW-0641">Proline biosynthesis</keyword>
<keyword id="KW-1185">Reference proteome</keyword>
<keyword id="KW-0808">Transferase</keyword>
<sequence length="371" mass="39356">MATTDVTVVVKIGTSSLTDTQTGLLRLSVLGPLVEVLTHLRRQGYAVILVSSGAVGVGCARLGWRQRPTAIAEKQAVAAVGQGRLIRLYDDLFSALNQPIAQVLLTRGDLVERSRYVNANRTFAQLLQMGVIPIVNENDTVAVEELKFGDNDSLSALVASMVQAKWLILLTDVDKLYSADPNRDPSAQPIERVLPGIPLQVKAEAQGKSGWGTGGMATKLTAAQIATAAGVTVVITNGKRPEQIPAILAGEAIGTRFDPAPQPASARKRWIAYGLIPEGSLTLDEGAVRAVCEQGRSLLPAGITAISGEFEAGAAVRLCDPSGQEVARGLVNYSAEELRQIKGKKTAEIPRILGYEGVDTAVHRDNLALLN</sequence>
<feature type="chain" id="PRO_0000253010" description="Glutamate 5-kinase">
    <location>
        <begin position="1"/>
        <end position="371"/>
    </location>
</feature>
<feature type="domain" description="PUA" evidence="1">
    <location>
        <begin position="278"/>
        <end position="356"/>
    </location>
</feature>
<feature type="binding site" evidence="1">
    <location>
        <position position="11"/>
    </location>
    <ligand>
        <name>ATP</name>
        <dbReference type="ChEBI" id="CHEBI:30616"/>
    </ligand>
</feature>
<feature type="binding site" evidence="1">
    <location>
        <position position="52"/>
    </location>
    <ligand>
        <name>substrate</name>
    </ligand>
</feature>
<feature type="binding site" evidence="1">
    <location>
        <position position="139"/>
    </location>
    <ligand>
        <name>substrate</name>
    </ligand>
</feature>
<feature type="binding site" evidence="1">
    <location>
        <position position="151"/>
    </location>
    <ligand>
        <name>substrate</name>
    </ligand>
</feature>
<feature type="binding site" evidence="1">
    <location>
        <begin position="171"/>
        <end position="172"/>
    </location>
    <ligand>
        <name>ATP</name>
        <dbReference type="ChEBI" id="CHEBI:30616"/>
    </ligand>
</feature>
<feature type="binding site" evidence="1">
    <location>
        <begin position="213"/>
        <end position="219"/>
    </location>
    <ligand>
        <name>ATP</name>
        <dbReference type="ChEBI" id="CHEBI:30616"/>
    </ligand>
</feature>
<accession>Q2JNZ0</accession>
<gene>
    <name evidence="1" type="primary">proB</name>
    <name type="ordered locus">CYB_0519</name>
</gene>
<name>PROB_SYNJB</name>
<protein>
    <recommendedName>
        <fullName evidence="1">Glutamate 5-kinase</fullName>
        <ecNumber evidence="1">2.7.2.11</ecNumber>
    </recommendedName>
    <alternativeName>
        <fullName evidence="1">Gamma-glutamyl kinase</fullName>
        <shortName evidence="1">GK</shortName>
    </alternativeName>
</protein>
<reference key="1">
    <citation type="journal article" date="2007" name="ISME J.">
        <title>Population level functional diversity in a microbial community revealed by comparative genomic and metagenomic analyses.</title>
        <authorList>
            <person name="Bhaya D."/>
            <person name="Grossman A.R."/>
            <person name="Steunou A.-S."/>
            <person name="Khuri N."/>
            <person name="Cohan F.M."/>
            <person name="Hamamura N."/>
            <person name="Melendrez M.C."/>
            <person name="Bateson M.M."/>
            <person name="Ward D.M."/>
            <person name="Heidelberg J.F."/>
        </authorList>
    </citation>
    <scope>NUCLEOTIDE SEQUENCE [LARGE SCALE GENOMIC DNA]</scope>
    <source>
        <strain>JA-2-3B'a(2-13)</strain>
    </source>
</reference>
<comment type="function">
    <text evidence="1">Catalyzes the transfer of a phosphate group to glutamate to form L-glutamate 5-phosphate.</text>
</comment>
<comment type="catalytic activity">
    <reaction evidence="1">
        <text>L-glutamate + ATP = L-glutamyl 5-phosphate + ADP</text>
        <dbReference type="Rhea" id="RHEA:14877"/>
        <dbReference type="ChEBI" id="CHEBI:29985"/>
        <dbReference type="ChEBI" id="CHEBI:30616"/>
        <dbReference type="ChEBI" id="CHEBI:58274"/>
        <dbReference type="ChEBI" id="CHEBI:456216"/>
        <dbReference type="EC" id="2.7.2.11"/>
    </reaction>
</comment>
<comment type="pathway">
    <text evidence="1">Amino-acid biosynthesis; L-proline biosynthesis; L-glutamate 5-semialdehyde from L-glutamate: step 1/2.</text>
</comment>
<comment type="subcellular location">
    <subcellularLocation>
        <location evidence="1">Cytoplasm</location>
    </subcellularLocation>
</comment>
<comment type="similarity">
    <text evidence="1">Belongs to the glutamate 5-kinase family.</text>
</comment>
<comment type="sequence caution" evidence="2">
    <conflict type="erroneous initiation">
        <sequence resource="EMBL-CDS" id="ABD01511"/>
    </conflict>
</comment>
<organism>
    <name type="scientific">Synechococcus sp. (strain JA-2-3B'a(2-13))</name>
    <name type="common">Cyanobacteria bacterium Yellowstone B-Prime</name>
    <dbReference type="NCBI Taxonomy" id="321332"/>
    <lineage>
        <taxon>Bacteria</taxon>
        <taxon>Bacillati</taxon>
        <taxon>Cyanobacteriota</taxon>
        <taxon>Cyanophyceae</taxon>
        <taxon>Synechococcales</taxon>
        <taxon>Synechococcaceae</taxon>
        <taxon>Synechococcus</taxon>
    </lineage>
</organism>
<proteinExistence type="inferred from homology"/>